<accession>P55220</accession>
<comment type="function">
    <text evidence="1">Mono-ADP-ribosylates eukaryotic muscle and non-muscle actin on 'Arg-177'. ADP-ribosylation prevents the polymerization of G-actin to F-actin, causing actin filament depolymerization, destruction of the cytoskeleton and cytotoxicity. Does not possess NAD(+)-glycohydrolase activity, unlike most mART enzymes (By similarity).</text>
</comment>
<comment type="catalytic activity">
    <reaction>
        <text>L-arginyl-[protein] + NAD(+) = N(omega)-(ADP-D-ribosyl)-L-arginyl-[protein] + nicotinamide + H(+)</text>
        <dbReference type="Rhea" id="RHEA:19149"/>
        <dbReference type="Rhea" id="RHEA-COMP:10532"/>
        <dbReference type="Rhea" id="RHEA-COMP:15087"/>
        <dbReference type="ChEBI" id="CHEBI:15378"/>
        <dbReference type="ChEBI" id="CHEBI:17154"/>
        <dbReference type="ChEBI" id="CHEBI:29965"/>
        <dbReference type="ChEBI" id="CHEBI:57540"/>
        <dbReference type="ChEBI" id="CHEBI:142554"/>
        <dbReference type="EC" id="2.4.2.31"/>
    </reaction>
</comment>
<comment type="subcellular location">
    <subcellularLocation>
        <location>Secreted</location>
    </subcellularLocation>
    <text evidence="1">Secreted via the type III secretion system 2 (SPI-2 T3SS).</text>
</comment>
<comment type="miscellaneous">
    <text>In Salmonella spp. the spv gene cluster is encoded on a highly transmissible plasmid.</text>
</comment>
<comment type="similarity">
    <text evidence="3">Belongs to the SpvB family.</text>
</comment>
<dbReference type="EC" id="2.4.2.31"/>
<dbReference type="EMBL" id="D14490">
    <property type="protein sequence ID" value="BAA03383.1"/>
    <property type="molecule type" value="Genomic_DNA"/>
</dbReference>
<dbReference type="SMR" id="P55220"/>
<dbReference type="GO" id="GO:0005737">
    <property type="term" value="C:cytoplasm"/>
    <property type="evidence" value="ECO:0007669"/>
    <property type="project" value="InterPro"/>
</dbReference>
<dbReference type="GO" id="GO:0005576">
    <property type="term" value="C:extracellular region"/>
    <property type="evidence" value="ECO:0007669"/>
    <property type="project" value="UniProtKB-SubCell"/>
</dbReference>
<dbReference type="GO" id="GO:0106274">
    <property type="term" value="F:NAD+-protein-arginine ADP-ribosyltransferase activity"/>
    <property type="evidence" value="ECO:0007669"/>
    <property type="project" value="UniProtKB-EC"/>
</dbReference>
<dbReference type="GO" id="GO:0000166">
    <property type="term" value="F:nucleotide binding"/>
    <property type="evidence" value="ECO:0007669"/>
    <property type="project" value="UniProtKB-KW"/>
</dbReference>
<dbReference type="GO" id="GO:0016779">
    <property type="term" value="F:nucleotidyltransferase activity"/>
    <property type="evidence" value="ECO:0007669"/>
    <property type="project" value="UniProtKB-KW"/>
</dbReference>
<dbReference type="GO" id="GO:0090729">
    <property type="term" value="F:toxin activity"/>
    <property type="evidence" value="ECO:0007669"/>
    <property type="project" value="UniProtKB-KW"/>
</dbReference>
<dbReference type="Gene3D" id="3.90.176.10">
    <property type="entry name" value="Toxin ADP-ribosyltransferase, Chain A, domain 1"/>
    <property type="match status" value="1"/>
</dbReference>
<dbReference type="InterPro" id="IPR003540">
    <property type="entry name" value="ADP-ribosyltransferase"/>
</dbReference>
<dbReference type="InterPro" id="IPR003284">
    <property type="entry name" value="Sal_SpvB"/>
</dbReference>
<dbReference type="NCBIfam" id="NF011780">
    <property type="entry name" value="PRK15244.1"/>
    <property type="match status" value="1"/>
</dbReference>
<dbReference type="Pfam" id="PF03496">
    <property type="entry name" value="ADPrib_exo_Tox"/>
    <property type="match status" value="1"/>
</dbReference>
<dbReference type="Pfam" id="PF03534">
    <property type="entry name" value="SpvB"/>
    <property type="match status" value="1"/>
</dbReference>
<dbReference type="PRINTS" id="PR01341">
    <property type="entry name" value="SALSPVBPROT"/>
</dbReference>
<dbReference type="SUPFAM" id="SSF56399">
    <property type="entry name" value="ADP-ribosylation"/>
    <property type="match status" value="1"/>
</dbReference>
<dbReference type="PROSITE" id="PS51996">
    <property type="entry name" value="TR_MART"/>
    <property type="match status" value="1"/>
</dbReference>
<proteinExistence type="inferred from homology"/>
<gene>
    <name type="primary">spvB</name>
</gene>
<sequence>MLILNGFSSATLALITPPFLPKGGKALSQSGPDGLASITLPLPISAERGFAPALALHYSSGGGNGPFGVGWSCATMSIARSTSHGVPQYNDSDEFLGPDGEVLVQTLSTGDAPNPVTCFAYGDVSFPQSYTVTRYQPRTESSFYRLEYWVGNSNGDDFWLLHDSNGILHLLGKTAAARLSDPQAASHTAQWLVEESVTPAGEHIYYSYLAENGDNVDLNGNEAGRDRSAMRYLSKVQYGNATPAADLYLWTSATPAVQWLFTLVFDYGERGVDPQVPPAFTAQNSWLARQDPFSLYNYGFEIRLHRLCRQVLMFHHFPDELGEADTLVSRLLLEYDENPILTQLCAARTLAYEGDGYRRAPVNNMMPPPPPPPMMGGNSSRPKSKWAIVEESKQIQALRYYSAQGYSVINKYLRGDDYPETQAKETLLSRDYLSTNEPSDEEFKNAMSVYINDIAEGLSSLPETDHRVVYRGLKLDKPALSDVLKEYTTIGNIIIDKAFMSTSPDKAWINDTILNIYLEKGHKGRILGDVAHFKGEAEMLFPPNTKLKIESIVNCGSQDFASQLSKLRLSDDATADTNRIKRIINMRVLNS</sequence>
<keyword id="KW-0328">Glycosyltransferase</keyword>
<keyword id="KW-0520">NAD</keyword>
<keyword id="KW-0521">NADP</keyword>
<keyword id="KW-0547">Nucleotide-binding</keyword>
<keyword id="KW-0548">Nucleotidyltransferase</keyword>
<keyword id="KW-0614">Plasmid</keyword>
<keyword id="KW-0964">Secreted</keyword>
<keyword id="KW-0800">Toxin</keyword>
<keyword id="KW-0808">Transferase</keyword>
<keyword id="KW-0843">Virulence</keyword>
<feature type="chain" id="PRO_0000221665" description="Mono(ADP-ribosyl)transferase SpvB">
    <location>
        <begin position="1"/>
        <end position="591"/>
    </location>
</feature>
<feature type="domain" description="TR mART core" evidence="2">
    <location>
        <begin position="373"/>
        <end position="576"/>
    </location>
</feature>
<feature type="active site" evidence="2">
    <location>
        <position position="471"/>
    </location>
</feature>
<feature type="active site" evidence="2">
    <location>
        <position position="501"/>
    </location>
</feature>
<feature type="active site" evidence="2">
    <location>
        <position position="538"/>
    </location>
</feature>
<geneLocation type="plasmid">
    <name>pNL2001</name>
</geneLocation>
<protein>
    <recommendedName>
        <fullName>Mono(ADP-ribosyl)transferase SpvB</fullName>
        <shortName>mADPRT</shortName>
        <shortName>mART</shortName>
        <ecNumber>2.4.2.31</ecNumber>
    </recommendedName>
    <alternativeName>
        <fullName>65 kDa virulence protein</fullName>
    </alternativeName>
    <alternativeName>
        <fullName>NAD(+)--arginine ADP-ribosyltransferase</fullName>
    </alternativeName>
    <alternativeName>
        <fullName>Toxin SpvB</fullName>
    </alternativeName>
</protein>
<name>SPVB_SALEN</name>
<organism>
    <name type="scientific">Salmonella enteritidis</name>
    <dbReference type="NCBI Taxonomy" id="149539"/>
    <lineage>
        <taxon>Bacteria</taxon>
        <taxon>Pseudomonadati</taxon>
        <taxon>Pseudomonadota</taxon>
        <taxon>Gammaproteobacteria</taxon>
        <taxon>Enterobacterales</taxon>
        <taxon>Enterobacteriaceae</taxon>
        <taxon>Salmonella</taxon>
    </lineage>
</organism>
<evidence type="ECO:0000250" key="1"/>
<evidence type="ECO:0000255" key="2">
    <source>
        <dbReference type="PROSITE-ProRule" id="PRU01340"/>
    </source>
</evidence>
<evidence type="ECO:0000305" key="3"/>
<reference key="1">
    <citation type="journal article" date="1994" name="Microbiology">
        <title>Virulence region of plasmid pNL2001 of Salmonella enteritidis.</title>
        <authorList>
            <person name="Suzuki S."/>
            <person name="Komase K."/>
            <person name="Matsui H."/>
            <person name="Abe A."/>
            <person name="Kawahara K."/>
            <person name="Tamura Y."/>
            <person name="Kijima M."/>
            <person name="Danbara H."/>
            <person name="Nakamura M."/>
            <person name="Sato S."/>
        </authorList>
    </citation>
    <scope>NUCLEOTIDE SEQUENCE [GENOMIC DNA]</scope>
    <source>
        <strain>AL1190</strain>
    </source>
</reference>